<name>HL4_CATRO</name>
<proteinExistence type="evidence at protein level"/>
<protein>
    <recommendedName>
        <fullName evidence="3">Hydrolase 4</fullName>
        <shortName evidence="3">CrHL4</shortName>
        <ecNumber evidence="2">4.-.-.-</ecNumber>
    </recommendedName>
</protein>
<accession>A0A2P1GIY1</accession>
<evidence type="ECO:0000250" key="1">
    <source>
        <dbReference type="UniProtKB" id="Q5NUF3"/>
    </source>
</evidence>
<evidence type="ECO:0000269" key="2">
    <source>
    </source>
</evidence>
<evidence type="ECO:0000303" key="3">
    <source>
    </source>
</evidence>
<evidence type="ECO:0000305" key="4"/>
<reference key="1">
    <citation type="journal article" date="2018" name="Proc. Natl. Acad. Sci. U.S.A.">
        <title>Solution of the multistep pathway for assembly of corynanthean, strychnos, iboga, and aspidosperma monoterpenoid indole alkaloids from 19E-geissoschizine.</title>
        <authorList>
            <person name="Qu Y."/>
            <person name="Easson M.E.A.M."/>
            <person name="Simionescu R."/>
            <person name="Hajicek J."/>
            <person name="Thamm A.M.K."/>
            <person name="Salim V."/>
            <person name="De Luca V."/>
        </authorList>
    </citation>
    <scope>NUCLEOTIDE SEQUENCE [MRNA]</scope>
</reference>
<reference key="2">
    <citation type="journal article" date="2019" name="Plant J.">
        <title>Completion of the canonical pathway for assembly of anticancer drugs vincristine/vinblastine in Catharanthus roseus.</title>
        <authorList>
            <person name="Qu Y."/>
            <person name="Safonova O."/>
            <person name="De Luca V."/>
        </authorList>
    </citation>
    <scope>FUNCTION</scope>
    <scope>CATALYTIC ACTIVITY</scope>
    <scope>PATHWAY</scope>
    <source>
        <strain>cv. Little Delicata</strain>
    </source>
</reference>
<keyword id="KW-0017">Alkaloid metabolism</keyword>
<keyword id="KW-0456">Lyase</keyword>
<sequence>MASSDETIFDLPPYIRSRKTPFFPLCFPSLNDPETGVSWKDVPISSQVSVRIYLPKITDHEKGEKLPILVYVHGAGFCLESAFKSFFHTYVKHFVTEAKAIVVSVEFRLAPEHHLPSAYEDCWEALQWVASHVGLDTSSLKTSIDKDPWIINYGDFERLYLWGDSTGANIVHNILIRAGKEKLKGGVKILGAILYYPYFLIRTSSKQSDYMENEYRSYWKLAYPNAPGGNDNLMINPTAENGPDLRGYGCSRLLVSMVADEARDITLLYIDALERSGWKGELDVADFEGDYFEIFSPDTELGKNKLRRSTSFIR</sequence>
<gene>
    <name evidence="3" type="primary">HL4</name>
</gene>
<dbReference type="EC" id="4.-.-.-" evidence="2"/>
<dbReference type="EMBL" id="MF770515">
    <property type="protein sequence ID" value="AVM85923.1"/>
    <property type="molecule type" value="mRNA"/>
</dbReference>
<dbReference type="SMR" id="A0A2P1GIY1"/>
<dbReference type="ESTHER" id="catro-hl4">
    <property type="family name" value="Plant_carboxylesterase"/>
</dbReference>
<dbReference type="GO" id="GO:0016787">
    <property type="term" value="F:hydrolase activity"/>
    <property type="evidence" value="ECO:0007669"/>
    <property type="project" value="InterPro"/>
</dbReference>
<dbReference type="GO" id="GO:0016829">
    <property type="term" value="F:lyase activity"/>
    <property type="evidence" value="ECO:0007669"/>
    <property type="project" value="UniProtKB-KW"/>
</dbReference>
<dbReference type="GO" id="GO:0009820">
    <property type="term" value="P:alkaloid metabolic process"/>
    <property type="evidence" value="ECO:0007669"/>
    <property type="project" value="UniProtKB-KW"/>
</dbReference>
<dbReference type="Gene3D" id="3.40.50.1820">
    <property type="entry name" value="alpha/beta hydrolase"/>
    <property type="match status" value="1"/>
</dbReference>
<dbReference type="InterPro" id="IPR013094">
    <property type="entry name" value="AB_hydrolase_3"/>
</dbReference>
<dbReference type="InterPro" id="IPR029058">
    <property type="entry name" value="AB_hydrolase_fold"/>
</dbReference>
<dbReference type="InterPro" id="IPR050466">
    <property type="entry name" value="Carboxylest/Gibb_receptor"/>
</dbReference>
<dbReference type="PANTHER" id="PTHR23024:SF551">
    <property type="entry name" value="2-HYDROXYISOFLAVANONE DEHYDRATASE-LIKE"/>
    <property type="match status" value="1"/>
</dbReference>
<dbReference type="PANTHER" id="PTHR23024">
    <property type="entry name" value="ARYLACETAMIDE DEACETYLASE"/>
    <property type="match status" value="1"/>
</dbReference>
<dbReference type="Pfam" id="PF07859">
    <property type="entry name" value="Abhydrolase_3"/>
    <property type="match status" value="1"/>
</dbReference>
<dbReference type="SUPFAM" id="SSF53474">
    <property type="entry name" value="alpha/beta-Hydrolases"/>
    <property type="match status" value="1"/>
</dbReference>
<feature type="chain" id="PRO_0000446425" description="Hydrolase 4">
    <location>
        <begin position="1"/>
        <end position="314"/>
    </location>
</feature>
<feature type="short sequence motif" description="Involved in the stabilization of the negatively charged intermediate by the formation of the oxyanion hole" evidence="1">
    <location>
        <begin position="73"/>
        <end position="75"/>
    </location>
</feature>
<feature type="active site" evidence="1">
    <location>
        <position position="165"/>
    </location>
</feature>
<feature type="active site" evidence="1">
    <location>
        <position position="260"/>
    </location>
</feature>
<organism>
    <name type="scientific">Catharanthus roseus</name>
    <name type="common">Madagascar periwinkle</name>
    <name type="synonym">Vinca rosea</name>
    <dbReference type="NCBI Taxonomy" id="4058"/>
    <lineage>
        <taxon>Eukaryota</taxon>
        <taxon>Viridiplantae</taxon>
        <taxon>Streptophyta</taxon>
        <taxon>Embryophyta</taxon>
        <taxon>Tracheophyta</taxon>
        <taxon>Spermatophyta</taxon>
        <taxon>Magnoliopsida</taxon>
        <taxon>eudicotyledons</taxon>
        <taxon>Gunneridae</taxon>
        <taxon>Pentapetalae</taxon>
        <taxon>asterids</taxon>
        <taxon>lamiids</taxon>
        <taxon>Gentianales</taxon>
        <taxon>Apocynaceae</taxon>
        <taxon>Rauvolfioideae</taxon>
        <taxon>Vinceae</taxon>
        <taxon>Catharanthinae</taxon>
        <taxon>Catharanthus</taxon>
    </lineage>
</organism>
<comment type="function">
    <text evidence="2">Component of the seco-iridoid and derivatives monoterpenoid indole alkaloids (MIAs, e.g. vincadifformine) biosynthesis pathway. Catalyzes the conversion of O-acetylstemmadenine (OAS) to vincadifformine. May also trigger the formation of additional unknown MIAs.</text>
</comment>
<comment type="pathway">
    <text evidence="2">Alkaloid biosynthesis.</text>
</comment>
<comment type="similarity">
    <text evidence="4">Belongs to the 'GDXG' lipolytic enzyme family.</text>
</comment>